<name>PNP_PSYA2</name>
<accession>Q4FVL0</accession>
<feature type="chain" id="PRO_0000329790" description="Polyribonucleotide nucleotidyltransferase">
    <location>
        <begin position="1"/>
        <end position="700"/>
    </location>
</feature>
<feature type="domain" description="KH" evidence="1">
    <location>
        <begin position="558"/>
        <end position="617"/>
    </location>
</feature>
<feature type="domain" description="S1 motif" evidence="1">
    <location>
        <begin position="627"/>
        <end position="695"/>
    </location>
</feature>
<feature type="binding site" evidence="1">
    <location>
        <position position="491"/>
    </location>
    <ligand>
        <name>Mg(2+)</name>
        <dbReference type="ChEBI" id="CHEBI:18420"/>
    </ligand>
</feature>
<feature type="binding site" evidence="1">
    <location>
        <position position="497"/>
    </location>
    <ligand>
        <name>Mg(2+)</name>
        <dbReference type="ChEBI" id="CHEBI:18420"/>
    </ligand>
</feature>
<organism>
    <name type="scientific">Psychrobacter arcticus (strain DSM 17307 / VKM B-2377 / 273-4)</name>
    <dbReference type="NCBI Taxonomy" id="259536"/>
    <lineage>
        <taxon>Bacteria</taxon>
        <taxon>Pseudomonadati</taxon>
        <taxon>Pseudomonadota</taxon>
        <taxon>Gammaproteobacteria</taxon>
        <taxon>Moraxellales</taxon>
        <taxon>Moraxellaceae</taxon>
        <taxon>Psychrobacter</taxon>
    </lineage>
</organism>
<dbReference type="EC" id="2.7.7.8" evidence="1"/>
<dbReference type="EMBL" id="CP000082">
    <property type="protein sequence ID" value="AAZ17948.1"/>
    <property type="molecule type" value="Genomic_DNA"/>
</dbReference>
<dbReference type="RefSeq" id="WP_011279387.1">
    <property type="nucleotide sequence ID" value="NC_007204.1"/>
</dbReference>
<dbReference type="SMR" id="Q4FVL0"/>
<dbReference type="STRING" id="259536.Psyc_0074"/>
<dbReference type="KEGG" id="par:Psyc_0074"/>
<dbReference type="eggNOG" id="COG1185">
    <property type="taxonomic scope" value="Bacteria"/>
</dbReference>
<dbReference type="HOGENOM" id="CLU_004217_2_2_6"/>
<dbReference type="OrthoDB" id="9804305at2"/>
<dbReference type="Proteomes" id="UP000000546">
    <property type="component" value="Chromosome"/>
</dbReference>
<dbReference type="GO" id="GO:0005829">
    <property type="term" value="C:cytosol"/>
    <property type="evidence" value="ECO:0007669"/>
    <property type="project" value="TreeGrafter"/>
</dbReference>
<dbReference type="GO" id="GO:0000175">
    <property type="term" value="F:3'-5'-RNA exonuclease activity"/>
    <property type="evidence" value="ECO:0007669"/>
    <property type="project" value="TreeGrafter"/>
</dbReference>
<dbReference type="GO" id="GO:0000287">
    <property type="term" value="F:magnesium ion binding"/>
    <property type="evidence" value="ECO:0007669"/>
    <property type="project" value="UniProtKB-UniRule"/>
</dbReference>
<dbReference type="GO" id="GO:0004654">
    <property type="term" value="F:polyribonucleotide nucleotidyltransferase activity"/>
    <property type="evidence" value="ECO:0007669"/>
    <property type="project" value="UniProtKB-UniRule"/>
</dbReference>
<dbReference type="GO" id="GO:0003723">
    <property type="term" value="F:RNA binding"/>
    <property type="evidence" value="ECO:0007669"/>
    <property type="project" value="UniProtKB-UniRule"/>
</dbReference>
<dbReference type="GO" id="GO:0006402">
    <property type="term" value="P:mRNA catabolic process"/>
    <property type="evidence" value="ECO:0007669"/>
    <property type="project" value="UniProtKB-UniRule"/>
</dbReference>
<dbReference type="GO" id="GO:0006396">
    <property type="term" value="P:RNA processing"/>
    <property type="evidence" value="ECO:0007669"/>
    <property type="project" value="InterPro"/>
</dbReference>
<dbReference type="CDD" id="cd02393">
    <property type="entry name" value="KH-I_PNPase"/>
    <property type="match status" value="1"/>
</dbReference>
<dbReference type="CDD" id="cd11363">
    <property type="entry name" value="RNase_PH_PNPase_1"/>
    <property type="match status" value="1"/>
</dbReference>
<dbReference type="CDD" id="cd11364">
    <property type="entry name" value="RNase_PH_PNPase_2"/>
    <property type="match status" value="1"/>
</dbReference>
<dbReference type="CDD" id="cd04472">
    <property type="entry name" value="S1_PNPase"/>
    <property type="match status" value="1"/>
</dbReference>
<dbReference type="FunFam" id="2.40.50.140:FF:000023">
    <property type="entry name" value="Polyribonucleotide nucleotidyltransferase"/>
    <property type="match status" value="1"/>
</dbReference>
<dbReference type="FunFam" id="3.30.1370.10:FF:000001">
    <property type="entry name" value="Polyribonucleotide nucleotidyltransferase"/>
    <property type="match status" value="1"/>
</dbReference>
<dbReference type="FunFam" id="3.30.230.70:FF:000001">
    <property type="entry name" value="Polyribonucleotide nucleotidyltransferase"/>
    <property type="match status" value="1"/>
</dbReference>
<dbReference type="FunFam" id="3.30.230.70:FF:000002">
    <property type="entry name" value="Polyribonucleotide nucleotidyltransferase"/>
    <property type="match status" value="1"/>
</dbReference>
<dbReference type="Gene3D" id="3.30.230.70">
    <property type="entry name" value="GHMP Kinase, N-terminal domain"/>
    <property type="match status" value="2"/>
</dbReference>
<dbReference type="Gene3D" id="3.30.1370.10">
    <property type="entry name" value="K Homology domain, type 1"/>
    <property type="match status" value="1"/>
</dbReference>
<dbReference type="Gene3D" id="2.40.50.140">
    <property type="entry name" value="Nucleic acid-binding proteins"/>
    <property type="match status" value="1"/>
</dbReference>
<dbReference type="HAMAP" id="MF_01595">
    <property type="entry name" value="PNPase"/>
    <property type="match status" value="1"/>
</dbReference>
<dbReference type="InterPro" id="IPR001247">
    <property type="entry name" value="ExoRNase_PH_dom1"/>
</dbReference>
<dbReference type="InterPro" id="IPR015847">
    <property type="entry name" value="ExoRNase_PH_dom2"/>
</dbReference>
<dbReference type="InterPro" id="IPR036345">
    <property type="entry name" value="ExoRNase_PH_dom2_sf"/>
</dbReference>
<dbReference type="InterPro" id="IPR004087">
    <property type="entry name" value="KH_dom"/>
</dbReference>
<dbReference type="InterPro" id="IPR004088">
    <property type="entry name" value="KH_dom_type_1"/>
</dbReference>
<dbReference type="InterPro" id="IPR036612">
    <property type="entry name" value="KH_dom_type_1_sf"/>
</dbReference>
<dbReference type="InterPro" id="IPR012340">
    <property type="entry name" value="NA-bd_OB-fold"/>
</dbReference>
<dbReference type="InterPro" id="IPR012162">
    <property type="entry name" value="PNPase"/>
</dbReference>
<dbReference type="InterPro" id="IPR027408">
    <property type="entry name" value="PNPase/RNase_PH_dom_sf"/>
</dbReference>
<dbReference type="InterPro" id="IPR015848">
    <property type="entry name" value="PNPase_PH_RNA-bd_bac/org-type"/>
</dbReference>
<dbReference type="InterPro" id="IPR020568">
    <property type="entry name" value="Ribosomal_Su5_D2-typ_SF"/>
</dbReference>
<dbReference type="InterPro" id="IPR003029">
    <property type="entry name" value="S1_domain"/>
</dbReference>
<dbReference type="NCBIfam" id="TIGR03591">
    <property type="entry name" value="polynuc_phos"/>
    <property type="match status" value="1"/>
</dbReference>
<dbReference type="NCBIfam" id="NF008805">
    <property type="entry name" value="PRK11824.1"/>
    <property type="match status" value="1"/>
</dbReference>
<dbReference type="PANTHER" id="PTHR11252">
    <property type="entry name" value="POLYRIBONUCLEOTIDE NUCLEOTIDYLTRANSFERASE"/>
    <property type="match status" value="1"/>
</dbReference>
<dbReference type="PANTHER" id="PTHR11252:SF0">
    <property type="entry name" value="POLYRIBONUCLEOTIDE NUCLEOTIDYLTRANSFERASE 1, MITOCHONDRIAL"/>
    <property type="match status" value="1"/>
</dbReference>
<dbReference type="Pfam" id="PF00013">
    <property type="entry name" value="KH_1"/>
    <property type="match status" value="1"/>
</dbReference>
<dbReference type="Pfam" id="PF03726">
    <property type="entry name" value="PNPase"/>
    <property type="match status" value="1"/>
</dbReference>
<dbReference type="Pfam" id="PF01138">
    <property type="entry name" value="RNase_PH"/>
    <property type="match status" value="2"/>
</dbReference>
<dbReference type="Pfam" id="PF03725">
    <property type="entry name" value="RNase_PH_C"/>
    <property type="match status" value="2"/>
</dbReference>
<dbReference type="Pfam" id="PF00575">
    <property type="entry name" value="S1"/>
    <property type="match status" value="1"/>
</dbReference>
<dbReference type="PIRSF" id="PIRSF005499">
    <property type="entry name" value="PNPase"/>
    <property type="match status" value="1"/>
</dbReference>
<dbReference type="SMART" id="SM00322">
    <property type="entry name" value="KH"/>
    <property type="match status" value="1"/>
</dbReference>
<dbReference type="SMART" id="SM00316">
    <property type="entry name" value="S1"/>
    <property type="match status" value="1"/>
</dbReference>
<dbReference type="SUPFAM" id="SSF54791">
    <property type="entry name" value="Eukaryotic type KH-domain (KH-domain type I)"/>
    <property type="match status" value="1"/>
</dbReference>
<dbReference type="SUPFAM" id="SSF50249">
    <property type="entry name" value="Nucleic acid-binding proteins"/>
    <property type="match status" value="1"/>
</dbReference>
<dbReference type="SUPFAM" id="SSF55666">
    <property type="entry name" value="Ribonuclease PH domain 2-like"/>
    <property type="match status" value="2"/>
</dbReference>
<dbReference type="SUPFAM" id="SSF54211">
    <property type="entry name" value="Ribosomal protein S5 domain 2-like"/>
    <property type="match status" value="2"/>
</dbReference>
<dbReference type="PROSITE" id="PS50084">
    <property type="entry name" value="KH_TYPE_1"/>
    <property type="match status" value="1"/>
</dbReference>
<dbReference type="PROSITE" id="PS50126">
    <property type="entry name" value="S1"/>
    <property type="match status" value="1"/>
</dbReference>
<proteinExistence type="inferred from homology"/>
<comment type="function">
    <text evidence="1">Involved in mRNA degradation. Catalyzes the phosphorolysis of single-stranded polyribonucleotides processively in the 3'- to 5'-direction.</text>
</comment>
<comment type="catalytic activity">
    <reaction evidence="1">
        <text>RNA(n+1) + phosphate = RNA(n) + a ribonucleoside 5'-diphosphate</text>
        <dbReference type="Rhea" id="RHEA:22096"/>
        <dbReference type="Rhea" id="RHEA-COMP:14527"/>
        <dbReference type="Rhea" id="RHEA-COMP:17342"/>
        <dbReference type="ChEBI" id="CHEBI:43474"/>
        <dbReference type="ChEBI" id="CHEBI:57930"/>
        <dbReference type="ChEBI" id="CHEBI:140395"/>
        <dbReference type="EC" id="2.7.7.8"/>
    </reaction>
</comment>
<comment type="cofactor">
    <cofactor evidence="1">
        <name>Mg(2+)</name>
        <dbReference type="ChEBI" id="CHEBI:18420"/>
    </cofactor>
</comment>
<comment type="subunit">
    <text evidence="1">Component of the RNA degradosome, which is a multiprotein complex involved in RNA processing and mRNA degradation.</text>
</comment>
<comment type="subcellular location">
    <subcellularLocation>
        <location evidence="1">Cytoplasm</location>
    </subcellularLocation>
</comment>
<comment type="similarity">
    <text evidence="1">Belongs to the polyribonucleotide nucleotidyltransferase family.</text>
</comment>
<evidence type="ECO:0000255" key="1">
    <source>
        <dbReference type="HAMAP-Rule" id="MF_01595"/>
    </source>
</evidence>
<reference key="1">
    <citation type="journal article" date="2010" name="Appl. Environ. Microbiol.">
        <title>The genome sequence of Psychrobacter arcticus 273-4, a psychroactive Siberian permafrost bacterium, reveals mechanisms for adaptation to low-temperature growth.</title>
        <authorList>
            <person name="Ayala-del-Rio H.L."/>
            <person name="Chain P.S."/>
            <person name="Grzymski J.J."/>
            <person name="Ponder M.A."/>
            <person name="Ivanova N."/>
            <person name="Bergholz P.W."/>
            <person name="Di Bartolo G."/>
            <person name="Hauser L."/>
            <person name="Land M."/>
            <person name="Bakermans C."/>
            <person name="Rodrigues D."/>
            <person name="Klappenbach J."/>
            <person name="Zarka D."/>
            <person name="Larimer F."/>
            <person name="Richardson P."/>
            <person name="Murray A."/>
            <person name="Thomashow M."/>
            <person name="Tiedje J.M."/>
        </authorList>
    </citation>
    <scope>NUCLEOTIDE SEQUENCE [LARGE SCALE GENOMIC DNA]</scope>
    <source>
        <strain>DSM 17307 / VKM B-2377 / 273-4</strain>
    </source>
</reference>
<sequence length="700" mass="75652">MTMFNTIKREFQYGNQQVVIETGRIARQANSILVHMGGVTVLVAAVVKSDAKEGQNFFPLTVNYQEKMYAAGKIPGAYGKREGRASESETLTSRLIDRPIRPLFPEGYVNEIQITATVVSSDKTQSADIAALIGASAALAISDAPFNGPVAAARVGFINGEYVLNPTLEELKESDLDLVVAGTKSAVLMVESEAAELSEDQMLGAVLYGHQQQQIVIDNIASMAAEIGTAKQQYTAPVRDQALETGMKEQFGAQVSDAYTITDKQARYSKLNEIKDAAIVALAGDAESESYSDTVSELKEIYNDLKYRTVRDNILSGKPRIDGRDLETVRALDVQVGVLPFTHGSALFTRGETQALVTTTLGNTRDVNMIDSLAGTIRDHFMLHYNFPHFSVGETGREGIPKRREIGHGRLARRGVQAMLPDSDRFPYVIRVVSEITESNGSSSMASVCGASLALMDAGVPIKAPVAGIAMGLVKEGERFAVLSDILGDEDHLGDMDFKVAGSKDGITALQMDIKIEGITPDIMEQALKQAHAGRIHILDAMNKVLPESRTEINAHAPNYAVIEINPDKIRDVIGKGGATIRQLTEETGAVIDIDDAGTIRIFGENKAATKAAIAKIEAITAEVEVGKTYEGTVARIVDFGAFVNVLPNTDGLVHISQIADERVENVSDYLKEGQIVKVLVQDVDNRGRIKLTMKGIEQS</sequence>
<protein>
    <recommendedName>
        <fullName evidence="1">Polyribonucleotide nucleotidyltransferase</fullName>
        <ecNumber evidence="1">2.7.7.8</ecNumber>
    </recommendedName>
    <alternativeName>
        <fullName evidence="1">Polynucleotide phosphorylase</fullName>
        <shortName evidence="1">PNPase</shortName>
    </alternativeName>
</protein>
<keyword id="KW-0963">Cytoplasm</keyword>
<keyword id="KW-0460">Magnesium</keyword>
<keyword id="KW-0479">Metal-binding</keyword>
<keyword id="KW-0548">Nucleotidyltransferase</keyword>
<keyword id="KW-1185">Reference proteome</keyword>
<keyword id="KW-0694">RNA-binding</keyword>
<keyword id="KW-0808">Transferase</keyword>
<gene>
    <name evidence="1" type="primary">pnp</name>
    <name type="ordered locus">Psyc_0074</name>
</gene>